<organism>
    <name type="scientific">Physcomitrium patens</name>
    <name type="common">Spreading-leaved earth moss</name>
    <name type="synonym">Physcomitrella patens</name>
    <dbReference type="NCBI Taxonomy" id="3218"/>
    <lineage>
        <taxon>Eukaryota</taxon>
        <taxon>Viridiplantae</taxon>
        <taxon>Streptophyta</taxon>
        <taxon>Embryophyta</taxon>
        <taxon>Bryophyta</taxon>
        <taxon>Bryophytina</taxon>
        <taxon>Bryopsida</taxon>
        <taxon>Funariidae</taxon>
        <taxon>Funariales</taxon>
        <taxon>Funariaceae</taxon>
        <taxon>Physcomitrium</taxon>
    </lineage>
</organism>
<geneLocation type="chloroplast"/>
<feature type="chain" id="PRO_0000217817" description="Photosystem I assembly protein Ycf3">
    <location>
        <begin position="1"/>
        <end position="168"/>
    </location>
</feature>
<feature type="repeat" description="TPR 1">
    <location>
        <begin position="35"/>
        <end position="68"/>
    </location>
</feature>
<feature type="repeat" description="TPR 2">
    <location>
        <begin position="72"/>
        <end position="105"/>
    </location>
</feature>
<feature type="repeat" description="TPR 3">
    <location>
        <begin position="120"/>
        <end position="153"/>
    </location>
</feature>
<dbReference type="EMBL" id="AP005672">
    <property type="protein sequence ID" value="BAC85051.1"/>
    <property type="molecule type" value="Genomic_DNA"/>
</dbReference>
<dbReference type="RefSeq" id="NP_904201.1">
    <property type="nucleotide sequence ID" value="NC_005087.2"/>
</dbReference>
<dbReference type="SMR" id="Q6YXP2"/>
<dbReference type="FunCoup" id="Q6YXP2">
    <property type="interactions" value="27"/>
</dbReference>
<dbReference type="STRING" id="3218.Q6YXP2"/>
<dbReference type="GeneID" id="2546700"/>
<dbReference type="KEGG" id="ppp:2546700"/>
<dbReference type="InParanoid" id="Q6YXP2"/>
<dbReference type="OrthoDB" id="431027at2759"/>
<dbReference type="Proteomes" id="UP000006727">
    <property type="component" value="Chloroplast"/>
</dbReference>
<dbReference type="GO" id="GO:0009535">
    <property type="term" value="C:chloroplast thylakoid membrane"/>
    <property type="evidence" value="ECO:0007669"/>
    <property type="project" value="UniProtKB-SubCell"/>
</dbReference>
<dbReference type="GO" id="GO:0015979">
    <property type="term" value="P:photosynthesis"/>
    <property type="evidence" value="ECO:0007669"/>
    <property type="project" value="UniProtKB-UniRule"/>
</dbReference>
<dbReference type="FunFam" id="1.25.40.10:FF:000004">
    <property type="entry name" value="Photosystem I assembly protein Ycf3"/>
    <property type="match status" value="1"/>
</dbReference>
<dbReference type="Gene3D" id="1.25.40.10">
    <property type="entry name" value="Tetratricopeptide repeat domain"/>
    <property type="match status" value="1"/>
</dbReference>
<dbReference type="HAMAP" id="MF_00439">
    <property type="entry name" value="Ycf3"/>
    <property type="match status" value="1"/>
</dbReference>
<dbReference type="InterPro" id="IPR022818">
    <property type="entry name" value="PSI_Ycf3_assembly"/>
</dbReference>
<dbReference type="InterPro" id="IPR011990">
    <property type="entry name" value="TPR-like_helical_dom_sf"/>
</dbReference>
<dbReference type="InterPro" id="IPR019734">
    <property type="entry name" value="TPR_rpt"/>
</dbReference>
<dbReference type="InterPro" id="IPR051685">
    <property type="entry name" value="Ycf3/AcsC/BcsC/TPR_MFPF"/>
</dbReference>
<dbReference type="NCBIfam" id="NF002725">
    <property type="entry name" value="PRK02603.1"/>
    <property type="match status" value="1"/>
</dbReference>
<dbReference type="PANTHER" id="PTHR44943">
    <property type="entry name" value="CELLULOSE SYNTHASE OPERON PROTEIN C"/>
    <property type="match status" value="1"/>
</dbReference>
<dbReference type="PANTHER" id="PTHR44943:SF8">
    <property type="entry name" value="TPR REPEAT-CONTAINING PROTEIN MJ0263"/>
    <property type="match status" value="1"/>
</dbReference>
<dbReference type="Pfam" id="PF00515">
    <property type="entry name" value="TPR_1"/>
    <property type="match status" value="1"/>
</dbReference>
<dbReference type="SMART" id="SM00028">
    <property type="entry name" value="TPR"/>
    <property type="match status" value="3"/>
</dbReference>
<dbReference type="SUPFAM" id="SSF48452">
    <property type="entry name" value="TPR-like"/>
    <property type="match status" value="1"/>
</dbReference>
<dbReference type="PROSITE" id="PS50005">
    <property type="entry name" value="TPR"/>
    <property type="match status" value="3"/>
</dbReference>
<dbReference type="PROSITE" id="PS50293">
    <property type="entry name" value="TPR_REGION"/>
    <property type="match status" value="1"/>
</dbReference>
<proteinExistence type="inferred from homology"/>
<comment type="function">
    <text evidence="1">Essential for the assembly of the photosystem I (PSI) complex. May act as a chaperone-like factor to guide the assembly of the PSI subunits.</text>
</comment>
<comment type="subcellular location">
    <subcellularLocation>
        <location evidence="1">Plastid</location>
        <location evidence="1">Chloroplast thylakoid membrane</location>
        <topology evidence="1">Peripheral membrane protein</topology>
    </subcellularLocation>
</comment>
<comment type="similarity">
    <text evidence="1">Belongs to the Ycf3 family.</text>
</comment>
<evidence type="ECO:0000255" key="1">
    <source>
        <dbReference type="HAMAP-Rule" id="MF_00439"/>
    </source>
</evidence>
<gene>
    <name evidence="1" type="primary">ycf3</name>
</gene>
<reference key="1">
    <citation type="journal article" date="2003" name="Nucleic Acids Res.">
        <title>Complete chloroplast DNA sequence of the moss Physcomitrella patens: evidence for the loss and relocation of rpoA from the chloroplast to the nucleus.</title>
        <authorList>
            <person name="Sugiura C."/>
            <person name="Kobayashi Y."/>
            <person name="Setsuyuki A."/>
            <person name="Sugita C."/>
            <person name="Sugita M."/>
        </authorList>
    </citation>
    <scope>NUCLEOTIDE SEQUENCE [LARGE SCALE GENOMIC DNA]</scope>
    <source>
        <strain>cv. Gransden 2004</strain>
    </source>
</reference>
<protein>
    <recommendedName>
        <fullName evidence="1">Photosystem I assembly protein Ycf3</fullName>
    </recommendedName>
</protein>
<name>YCF3_PHYPA</name>
<sequence>MPRSQKNDNFIDKTFTIVADILLRIIPTTQREKEAFTYYRDGMSAQSEGEYAEALQNYYEAMRLEIDPYDRSYILYNIGLIHTSNGEHAKALEYYFQALERNPSLPQAFNNMAVICHYRGEQAIQQGDSETSEAWFNQAADYWKQAIALAPSNYIEAQNWLKITDRLK</sequence>
<keyword id="KW-0150">Chloroplast</keyword>
<keyword id="KW-0472">Membrane</keyword>
<keyword id="KW-0602">Photosynthesis</keyword>
<keyword id="KW-0934">Plastid</keyword>
<keyword id="KW-1185">Reference proteome</keyword>
<keyword id="KW-0677">Repeat</keyword>
<keyword id="KW-0793">Thylakoid</keyword>
<keyword id="KW-0802">TPR repeat</keyword>
<accession>Q6YXP2</accession>